<dbReference type="EMBL" id="CP000803">
    <property type="protein sequence ID" value="ABU61967.1"/>
    <property type="molecule type" value="Genomic_DNA"/>
</dbReference>
<dbReference type="RefSeq" id="WP_010031937.1">
    <property type="nucleotide sequence ID" value="NC_009749.1"/>
</dbReference>
<dbReference type="SMR" id="A7NDB4"/>
<dbReference type="KEGG" id="fta:FTA_1492"/>
<dbReference type="HOGENOM" id="CLU_169643_1_1_6"/>
<dbReference type="GO" id="GO:0022625">
    <property type="term" value="C:cytosolic large ribosomal subunit"/>
    <property type="evidence" value="ECO:0007669"/>
    <property type="project" value="TreeGrafter"/>
</dbReference>
<dbReference type="GO" id="GO:0003735">
    <property type="term" value="F:structural constituent of ribosome"/>
    <property type="evidence" value="ECO:0007669"/>
    <property type="project" value="InterPro"/>
</dbReference>
<dbReference type="GO" id="GO:0006412">
    <property type="term" value="P:translation"/>
    <property type="evidence" value="ECO:0007669"/>
    <property type="project" value="UniProtKB-UniRule"/>
</dbReference>
<dbReference type="FunFam" id="4.10.410.60:FF:000001">
    <property type="entry name" value="50S ribosomal protein L35"/>
    <property type="match status" value="1"/>
</dbReference>
<dbReference type="Gene3D" id="4.10.410.60">
    <property type="match status" value="1"/>
</dbReference>
<dbReference type="HAMAP" id="MF_00514">
    <property type="entry name" value="Ribosomal_bL35"/>
    <property type="match status" value="1"/>
</dbReference>
<dbReference type="InterPro" id="IPR001706">
    <property type="entry name" value="Ribosomal_bL35"/>
</dbReference>
<dbReference type="InterPro" id="IPR021137">
    <property type="entry name" value="Ribosomal_bL35-like"/>
</dbReference>
<dbReference type="InterPro" id="IPR018265">
    <property type="entry name" value="Ribosomal_bL35_CS"/>
</dbReference>
<dbReference type="InterPro" id="IPR037229">
    <property type="entry name" value="Ribosomal_bL35_sf"/>
</dbReference>
<dbReference type="NCBIfam" id="TIGR00001">
    <property type="entry name" value="rpmI_bact"/>
    <property type="match status" value="1"/>
</dbReference>
<dbReference type="PANTHER" id="PTHR33343">
    <property type="entry name" value="54S RIBOSOMAL PROTEIN BL35M"/>
    <property type="match status" value="1"/>
</dbReference>
<dbReference type="PANTHER" id="PTHR33343:SF1">
    <property type="entry name" value="LARGE RIBOSOMAL SUBUNIT PROTEIN BL35M"/>
    <property type="match status" value="1"/>
</dbReference>
<dbReference type="Pfam" id="PF01632">
    <property type="entry name" value="Ribosomal_L35p"/>
    <property type="match status" value="1"/>
</dbReference>
<dbReference type="PRINTS" id="PR00064">
    <property type="entry name" value="RIBOSOMALL35"/>
</dbReference>
<dbReference type="SUPFAM" id="SSF143034">
    <property type="entry name" value="L35p-like"/>
    <property type="match status" value="1"/>
</dbReference>
<dbReference type="PROSITE" id="PS00936">
    <property type="entry name" value="RIBOSOMAL_L35"/>
    <property type="match status" value="1"/>
</dbReference>
<feature type="chain" id="PRO_1000050691" description="Large ribosomal subunit protein bL35">
    <location>
        <begin position="1"/>
        <end position="65"/>
    </location>
</feature>
<feature type="region of interest" description="Disordered" evidence="2">
    <location>
        <begin position="1"/>
        <end position="25"/>
    </location>
</feature>
<gene>
    <name evidence="1" type="primary">rpmI</name>
    <name type="ordered locus">FTA_1492</name>
</gene>
<proteinExistence type="inferred from homology"/>
<organism>
    <name type="scientific">Francisella tularensis subsp. holarctica (strain FTNF002-00 / FTA)</name>
    <dbReference type="NCBI Taxonomy" id="458234"/>
    <lineage>
        <taxon>Bacteria</taxon>
        <taxon>Pseudomonadati</taxon>
        <taxon>Pseudomonadota</taxon>
        <taxon>Gammaproteobacteria</taxon>
        <taxon>Thiotrichales</taxon>
        <taxon>Francisellaceae</taxon>
        <taxon>Francisella</taxon>
    </lineage>
</organism>
<reference key="1">
    <citation type="journal article" date="2009" name="PLoS ONE">
        <title>Complete genome sequence of Francisella tularensis subspecies holarctica FTNF002-00.</title>
        <authorList>
            <person name="Barabote R.D."/>
            <person name="Xie G."/>
            <person name="Brettin T.S."/>
            <person name="Hinrichs S.H."/>
            <person name="Fey P.D."/>
            <person name="Jay J.J."/>
            <person name="Engle J.L."/>
            <person name="Godbole S.D."/>
            <person name="Noronha J.M."/>
            <person name="Scheuermann R.H."/>
            <person name="Zhou L.W."/>
            <person name="Lion C."/>
            <person name="Dempsey M.P."/>
        </authorList>
    </citation>
    <scope>NUCLEOTIDE SEQUENCE [LARGE SCALE GENOMIC DNA]</scope>
    <source>
        <strain>FTNF002-00 / FTA</strain>
    </source>
</reference>
<comment type="similarity">
    <text evidence="1">Belongs to the bacterial ribosomal protein bL35 family.</text>
</comment>
<name>RL35_FRATF</name>
<protein>
    <recommendedName>
        <fullName evidence="1">Large ribosomal subunit protein bL35</fullName>
    </recommendedName>
    <alternativeName>
        <fullName evidence="3">50S ribosomal protein L35</fullName>
    </alternativeName>
</protein>
<evidence type="ECO:0000255" key="1">
    <source>
        <dbReference type="HAMAP-Rule" id="MF_00514"/>
    </source>
</evidence>
<evidence type="ECO:0000256" key="2">
    <source>
        <dbReference type="SAM" id="MobiDB-lite"/>
    </source>
</evidence>
<evidence type="ECO:0000305" key="3"/>
<accession>A7NDB4</accession>
<sequence length="65" mass="7400">MPKLKTKSSAAKRFKKTGKGGFKHRCANRAHINTKMTTKRKRHLRGMNQVAKVDTTSLVQQMPYA</sequence>
<keyword id="KW-0687">Ribonucleoprotein</keyword>
<keyword id="KW-0689">Ribosomal protein</keyword>